<name>RAPA_PSEPW</name>
<proteinExistence type="inferred from homology"/>
<dbReference type="EC" id="3.6.4.-" evidence="1"/>
<dbReference type="EMBL" id="CP000949">
    <property type="protein sequence ID" value="ACA71667.1"/>
    <property type="molecule type" value="Genomic_DNA"/>
</dbReference>
<dbReference type="SMR" id="B1J1F5"/>
<dbReference type="STRING" id="390235.PputW619_1162"/>
<dbReference type="KEGG" id="ppw:PputW619_1162"/>
<dbReference type="eggNOG" id="COG0553">
    <property type="taxonomic scope" value="Bacteria"/>
</dbReference>
<dbReference type="HOGENOM" id="CLU_011520_0_0_6"/>
<dbReference type="OrthoDB" id="9814088at2"/>
<dbReference type="GO" id="GO:0005524">
    <property type="term" value="F:ATP binding"/>
    <property type="evidence" value="ECO:0007669"/>
    <property type="project" value="UniProtKB-UniRule"/>
</dbReference>
<dbReference type="GO" id="GO:0003677">
    <property type="term" value="F:DNA binding"/>
    <property type="evidence" value="ECO:0007669"/>
    <property type="project" value="UniProtKB-KW"/>
</dbReference>
<dbReference type="GO" id="GO:0004386">
    <property type="term" value="F:helicase activity"/>
    <property type="evidence" value="ECO:0007669"/>
    <property type="project" value="UniProtKB-UniRule"/>
</dbReference>
<dbReference type="GO" id="GO:0016817">
    <property type="term" value="F:hydrolase activity, acting on acid anhydrides"/>
    <property type="evidence" value="ECO:0007669"/>
    <property type="project" value="InterPro"/>
</dbReference>
<dbReference type="GO" id="GO:0006355">
    <property type="term" value="P:regulation of DNA-templated transcription"/>
    <property type="evidence" value="ECO:0007669"/>
    <property type="project" value="UniProtKB-UniRule"/>
</dbReference>
<dbReference type="CDD" id="cd18011">
    <property type="entry name" value="DEXDc_RapA"/>
    <property type="match status" value="1"/>
</dbReference>
<dbReference type="CDD" id="cd18793">
    <property type="entry name" value="SF2_C_SNF"/>
    <property type="match status" value="1"/>
</dbReference>
<dbReference type="Gene3D" id="2.30.30.140">
    <property type="match status" value="1"/>
</dbReference>
<dbReference type="Gene3D" id="2.30.30.930">
    <property type="match status" value="1"/>
</dbReference>
<dbReference type="Gene3D" id="3.30.360.80">
    <property type="match status" value="1"/>
</dbReference>
<dbReference type="Gene3D" id="6.10.140.1500">
    <property type="match status" value="1"/>
</dbReference>
<dbReference type="Gene3D" id="6.10.140.2230">
    <property type="match status" value="1"/>
</dbReference>
<dbReference type="Gene3D" id="3.40.50.300">
    <property type="entry name" value="P-loop containing nucleotide triphosphate hydrolases"/>
    <property type="match status" value="1"/>
</dbReference>
<dbReference type="Gene3D" id="3.40.50.10810">
    <property type="entry name" value="Tandem AAA-ATPase domain"/>
    <property type="match status" value="1"/>
</dbReference>
<dbReference type="HAMAP" id="MF_01821">
    <property type="entry name" value="Helicase_RapA"/>
    <property type="match status" value="1"/>
</dbReference>
<dbReference type="InterPro" id="IPR014001">
    <property type="entry name" value="Helicase_ATP-bd"/>
</dbReference>
<dbReference type="InterPro" id="IPR001650">
    <property type="entry name" value="Helicase_C-like"/>
</dbReference>
<dbReference type="InterPro" id="IPR023949">
    <property type="entry name" value="Helicase_RapA"/>
</dbReference>
<dbReference type="InterPro" id="IPR027417">
    <property type="entry name" value="P-loop_NTPase"/>
</dbReference>
<dbReference type="InterPro" id="IPR022737">
    <property type="entry name" value="RapA_C"/>
</dbReference>
<dbReference type="InterPro" id="IPR038718">
    <property type="entry name" value="SNF2-like_sf"/>
</dbReference>
<dbReference type="InterPro" id="IPR049730">
    <property type="entry name" value="SNF2/RAD54-like_C"/>
</dbReference>
<dbReference type="InterPro" id="IPR000330">
    <property type="entry name" value="SNF2_N"/>
</dbReference>
<dbReference type="InterPro" id="IPR040765">
    <property type="entry name" value="Tudor_1_RapA"/>
</dbReference>
<dbReference type="InterPro" id="IPR040766">
    <property type="entry name" value="Tudor_2_RapA"/>
</dbReference>
<dbReference type="NCBIfam" id="NF003426">
    <property type="entry name" value="PRK04914.1"/>
    <property type="match status" value="1"/>
</dbReference>
<dbReference type="PANTHER" id="PTHR45766">
    <property type="entry name" value="DNA ANNEALING HELICASE AND ENDONUCLEASE ZRANB3 FAMILY MEMBER"/>
    <property type="match status" value="1"/>
</dbReference>
<dbReference type="PANTHER" id="PTHR45766:SF6">
    <property type="entry name" value="SWI_SNF-RELATED MATRIX-ASSOCIATED ACTIN-DEPENDENT REGULATOR OF CHROMATIN SUBFAMILY A-LIKE PROTEIN 1"/>
    <property type="match status" value="1"/>
</dbReference>
<dbReference type="Pfam" id="PF00271">
    <property type="entry name" value="Helicase_C"/>
    <property type="match status" value="1"/>
</dbReference>
<dbReference type="Pfam" id="PF12137">
    <property type="entry name" value="RapA_C"/>
    <property type="match status" value="1"/>
</dbReference>
<dbReference type="Pfam" id="PF00176">
    <property type="entry name" value="SNF2-rel_dom"/>
    <property type="match status" value="1"/>
</dbReference>
<dbReference type="Pfam" id="PF18339">
    <property type="entry name" value="Tudor_1_RapA"/>
    <property type="match status" value="1"/>
</dbReference>
<dbReference type="Pfam" id="PF18337">
    <property type="entry name" value="Tudor_RapA"/>
    <property type="match status" value="1"/>
</dbReference>
<dbReference type="SMART" id="SM00487">
    <property type="entry name" value="DEXDc"/>
    <property type="match status" value="1"/>
</dbReference>
<dbReference type="SMART" id="SM00490">
    <property type="entry name" value="HELICc"/>
    <property type="match status" value="1"/>
</dbReference>
<dbReference type="SUPFAM" id="SSF52540">
    <property type="entry name" value="P-loop containing nucleoside triphosphate hydrolases"/>
    <property type="match status" value="2"/>
</dbReference>
<dbReference type="PROSITE" id="PS51192">
    <property type="entry name" value="HELICASE_ATP_BIND_1"/>
    <property type="match status" value="1"/>
</dbReference>
<dbReference type="PROSITE" id="PS51194">
    <property type="entry name" value="HELICASE_CTER"/>
    <property type="match status" value="1"/>
</dbReference>
<gene>
    <name evidence="1" type="primary">rapA</name>
    <name type="ordered locus">PputW619_1162</name>
</gene>
<sequence>MAQQYQPGQRWISDSEAELGLGTILAQDGRLLTVLYPATGDTRQYSLRNAPLTRVRFSPGDQITHFEGWKLTVREVEDIDGLMVYHGLDGQNQPRTLPETQLSNFIQFRLASDRLFAGQIDPLSWFSLRYNTLQHTSKQVQSSLWGLGGCRAQPIAHQLHIAREVADRSAPRVLLADEVGLGKTIEAGLVIHRQLLTGRANRVLILVPENLQHQWLVEMRRRFNLQVALFDAERFIESDASNPFEDAQLALVALEWLVEDEKAQDALFAAGWDLMVVDEAHHLVWHEDKASTEYSLVEQLAQVIPGVLLLTATPEQLGQDSHFARLRLLDPNRFHDLAAFRAESEHYRPVAEAVQELLDEGRLSPKAHATIQGFLGAEGEALLAAVSDGDSQASARLIRELLDRHGTGRVLFRNTRAAIQGFPERELHPYPLPMPEQYRDLPAGEHAELYPEVAFQAQGEVSDDERWWRFDPRVDWLIDTLKMLKRTKVLVICAHAETAMDLEDALRVRSGIPASVFHEGMSILERDRAAAYFADEEFGAQVLICSEIGSEGRNFQFAHHLVMFDLPAHPDLLEQRIGRLDRIGQKHVIQLHIPYLQEGPQERLFQWYHEALNAFLNTCPTGNALQHQFGPRLLPMLEGGDSKAWDALVAEAKGERERLEAELHSGRDRLLELNSGGAGEGQALVEDILEQDDQFALPIYMETLFDAFGIDSEDHSENALILKPSEKMLDASFPLGDDEGVTITYDRGQALSREDMQFLTWEHPMVQGGMDLVLSGSMGNTAVALIKNKALKPGTVLLELLFVSEVVAPRSLQLGRYLPPAALRCLLDANGNDLASRVAFETLNEQLESVPRASANKFVQAQRDVLAKRISGGEAKIMPTHVERVAEAQRRLAAEADEELARLTALKAVNPSVRDSEIDALRKQREDGLAMLEKAALRLEAIRVLVAG</sequence>
<feature type="chain" id="PRO_1000188182" description="RNA polymerase-associated protein RapA">
    <location>
        <begin position="1"/>
        <end position="948"/>
    </location>
</feature>
<feature type="domain" description="Helicase ATP-binding" evidence="1">
    <location>
        <begin position="164"/>
        <end position="332"/>
    </location>
</feature>
<feature type="domain" description="Helicase C-terminal" evidence="1">
    <location>
        <begin position="473"/>
        <end position="627"/>
    </location>
</feature>
<feature type="short sequence motif" description="DEAH box">
    <location>
        <begin position="278"/>
        <end position="281"/>
    </location>
</feature>
<feature type="binding site" evidence="1">
    <location>
        <begin position="177"/>
        <end position="184"/>
    </location>
    <ligand>
        <name>ATP</name>
        <dbReference type="ChEBI" id="CHEBI:30616"/>
    </ligand>
</feature>
<organism>
    <name type="scientific">Pseudomonas putida (strain W619)</name>
    <dbReference type="NCBI Taxonomy" id="390235"/>
    <lineage>
        <taxon>Bacteria</taxon>
        <taxon>Pseudomonadati</taxon>
        <taxon>Pseudomonadota</taxon>
        <taxon>Gammaproteobacteria</taxon>
        <taxon>Pseudomonadales</taxon>
        <taxon>Pseudomonadaceae</taxon>
        <taxon>Pseudomonas</taxon>
    </lineage>
</organism>
<evidence type="ECO:0000255" key="1">
    <source>
        <dbReference type="HAMAP-Rule" id="MF_01821"/>
    </source>
</evidence>
<reference key="1">
    <citation type="submission" date="2008-02" db="EMBL/GenBank/DDBJ databases">
        <title>Complete sequence of Pseudomonas putida W619.</title>
        <authorList>
            <person name="Copeland A."/>
            <person name="Lucas S."/>
            <person name="Lapidus A."/>
            <person name="Barry K."/>
            <person name="Detter J.C."/>
            <person name="Glavina del Rio T."/>
            <person name="Dalin E."/>
            <person name="Tice H."/>
            <person name="Pitluck S."/>
            <person name="Chain P."/>
            <person name="Malfatti S."/>
            <person name="Shin M."/>
            <person name="Vergez L."/>
            <person name="Schmutz J."/>
            <person name="Larimer F."/>
            <person name="Land M."/>
            <person name="Hauser L."/>
            <person name="Kyrpides N."/>
            <person name="Kim E."/>
            <person name="Taghavi S."/>
            <person name="Vangronsveld D."/>
            <person name="van der Lelie D."/>
            <person name="Richardson P."/>
        </authorList>
    </citation>
    <scope>NUCLEOTIDE SEQUENCE [LARGE SCALE GENOMIC DNA]</scope>
    <source>
        <strain>W619</strain>
    </source>
</reference>
<accession>B1J1F5</accession>
<protein>
    <recommendedName>
        <fullName evidence="1">RNA polymerase-associated protein RapA</fullName>
        <ecNumber evidence="1">3.6.4.-</ecNumber>
    </recommendedName>
    <alternativeName>
        <fullName evidence="1">ATP-dependent helicase HepA</fullName>
    </alternativeName>
</protein>
<comment type="function">
    <text evidence="1">Transcription regulator that activates transcription by stimulating RNA polymerase (RNAP) recycling in case of stress conditions such as supercoiled DNA or high salt concentrations. Probably acts by releasing the RNAP, when it is trapped or immobilized on tightly supercoiled DNA. Does not activate transcription on linear DNA. Probably not involved in DNA repair.</text>
</comment>
<comment type="subunit">
    <text evidence="1">Interacts with the RNAP. Has a higher affinity for the core RNAP than for the holoenzyme. Its ATPase activity is stimulated by binding to RNAP.</text>
</comment>
<comment type="similarity">
    <text evidence="1">Belongs to the SNF2/RAD54 helicase family. RapA subfamily.</text>
</comment>
<keyword id="KW-0010">Activator</keyword>
<keyword id="KW-0067">ATP-binding</keyword>
<keyword id="KW-0238">DNA-binding</keyword>
<keyword id="KW-0347">Helicase</keyword>
<keyword id="KW-0378">Hydrolase</keyword>
<keyword id="KW-0547">Nucleotide-binding</keyword>
<keyword id="KW-0804">Transcription</keyword>
<keyword id="KW-0805">Transcription regulation</keyword>